<sequence length="274" mass="30887">MAVTKLDVQYLRKMTGAGVMDCRNALREAEGNYDKAVEVIRKKGKVIASKRESREASEGCVLASSKQGFASIVAVKCETDFVAKGEDFVDMVRKILSVTLENKPRTIEDLNDLFIDGRRICEWITERSGISGEKMELGIYEYLEAPYTVAYVHPGNKLAVIVGFNQVIVKTQVARDVAMQIAAMNPISVDKNSIPAKIVEREEKIAREKAIEQGKPEAILDRIVNGALNKYYKEYTLLLQNFVKDPKITIDDYLKGQSRDLTVIEFRRINLNME</sequence>
<proteinExistence type="inferred from homology"/>
<reference key="1">
    <citation type="journal article" date="2008" name="Science">
        <title>Genome of an endosymbiont coupling N2 fixation to cellulolysis within RT protist cells in termite gut.</title>
        <authorList>
            <person name="Hongoh Y."/>
            <person name="Sharma V.K."/>
            <person name="Prakash T."/>
            <person name="Noda S."/>
            <person name="Toh H."/>
            <person name="Taylor T.D."/>
            <person name="Kudo T."/>
            <person name="Sakaki Y."/>
            <person name="Toyoda A."/>
            <person name="Hattori M."/>
            <person name="Ohkuma M."/>
        </authorList>
    </citation>
    <scope>NUCLEOTIDE SEQUENCE [LARGE SCALE GENOMIC DNA]</scope>
</reference>
<name>EFTS_AZOPC</name>
<protein>
    <recommendedName>
        <fullName evidence="1">Elongation factor Ts</fullName>
        <shortName evidence="1">EF-Ts</shortName>
    </recommendedName>
</protein>
<dbReference type="EMBL" id="AP010656">
    <property type="protein sequence ID" value="BAG83550.1"/>
    <property type="molecule type" value="Genomic_DNA"/>
</dbReference>
<dbReference type="RefSeq" id="WP_012573311.1">
    <property type="nucleotide sequence ID" value="NC_011565.1"/>
</dbReference>
<dbReference type="SMR" id="B6YQS8"/>
<dbReference type="STRING" id="511995.CFPG_287"/>
<dbReference type="KEGG" id="aps:CFPG_287"/>
<dbReference type="eggNOG" id="COG0264">
    <property type="taxonomic scope" value="Bacteria"/>
</dbReference>
<dbReference type="HOGENOM" id="CLU_047155_0_0_10"/>
<dbReference type="OrthoDB" id="9808348at2"/>
<dbReference type="Proteomes" id="UP000000723">
    <property type="component" value="Chromosome"/>
</dbReference>
<dbReference type="GO" id="GO:0005737">
    <property type="term" value="C:cytoplasm"/>
    <property type="evidence" value="ECO:0007669"/>
    <property type="project" value="UniProtKB-SubCell"/>
</dbReference>
<dbReference type="GO" id="GO:0003746">
    <property type="term" value="F:translation elongation factor activity"/>
    <property type="evidence" value="ECO:0007669"/>
    <property type="project" value="UniProtKB-UniRule"/>
</dbReference>
<dbReference type="CDD" id="cd14275">
    <property type="entry name" value="UBA_EF-Ts"/>
    <property type="match status" value="1"/>
</dbReference>
<dbReference type="FunFam" id="1.10.8.10:FF:000001">
    <property type="entry name" value="Elongation factor Ts"/>
    <property type="match status" value="1"/>
</dbReference>
<dbReference type="Gene3D" id="1.10.286.20">
    <property type="match status" value="1"/>
</dbReference>
<dbReference type="Gene3D" id="1.10.8.10">
    <property type="entry name" value="DNA helicase RuvA subunit, C-terminal domain"/>
    <property type="match status" value="1"/>
</dbReference>
<dbReference type="Gene3D" id="3.30.479.20">
    <property type="entry name" value="Elongation factor Ts, dimerisation domain"/>
    <property type="match status" value="2"/>
</dbReference>
<dbReference type="HAMAP" id="MF_00050">
    <property type="entry name" value="EF_Ts"/>
    <property type="match status" value="1"/>
</dbReference>
<dbReference type="InterPro" id="IPR036402">
    <property type="entry name" value="EF-Ts_dimer_sf"/>
</dbReference>
<dbReference type="InterPro" id="IPR001816">
    <property type="entry name" value="Transl_elong_EFTs/EF1B"/>
</dbReference>
<dbReference type="InterPro" id="IPR014039">
    <property type="entry name" value="Transl_elong_EFTs/EF1B_dimer"/>
</dbReference>
<dbReference type="InterPro" id="IPR018101">
    <property type="entry name" value="Transl_elong_Ts_CS"/>
</dbReference>
<dbReference type="InterPro" id="IPR009060">
    <property type="entry name" value="UBA-like_sf"/>
</dbReference>
<dbReference type="NCBIfam" id="TIGR00116">
    <property type="entry name" value="tsf"/>
    <property type="match status" value="1"/>
</dbReference>
<dbReference type="PANTHER" id="PTHR11741">
    <property type="entry name" value="ELONGATION FACTOR TS"/>
    <property type="match status" value="1"/>
</dbReference>
<dbReference type="PANTHER" id="PTHR11741:SF0">
    <property type="entry name" value="ELONGATION FACTOR TS, MITOCHONDRIAL"/>
    <property type="match status" value="1"/>
</dbReference>
<dbReference type="Pfam" id="PF00889">
    <property type="entry name" value="EF_TS"/>
    <property type="match status" value="1"/>
</dbReference>
<dbReference type="SUPFAM" id="SSF54713">
    <property type="entry name" value="Elongation factor Ts (EF-Ts), dimerisation domain"/>
    <property type="match status" value="1"/>
</dbReference>
<dbReference type="SUPFAM" id="SSF46934">
    <property type="entry name" value="UBA-like"/>
    <property type="match status" value="1"/>
</dbReference>
<dbReference type="PROSITE" id="PS01127">
    <property type="entry name" value="EF_TS_2"/>
    <property type="match status" value="1"/>
</dbReference>
<keyword id="KW-0963">Cytoplasm</keyword>
<keyword id="KW-0251">Elongation factor</keyword>
<keyword id="KW-0648">Protein biosynthesis</keyword>
<keyword id="KW-1185">Reference proteome</keyword>
<gene>
    <name evidence="1" type="primary">tsf</name>
    <name type="ordered locus">CFPG_287</name>
</gene>
<accession>B6YQS8</accession>
<organism>
    <name type="scientific">Azobacteroides pseudotrichonymphae genomovar. CFP2</name>
    <dbReference type="NCBI Taxonomy" id="511995"/>
    <lineage>
        <taxon>Bacteria</taxon>
        <taxon>Pseudomonadati</taxon>
        <taxon>Bacteroidota</taxon>
        <taxon>Bacteroidia</taxon>
        <taxon>Bacteroidales</taxon>
        <taxon>Candidatus Azobacteroides</taxon>
    </lineage>
</organism>
<feature type="chain" id="PRO_1000116687" description="Elongation factor Ts">
    <location>
        <begin position="1"/>
        <end position="274"/>
    </location>
</feature>
<feature type="region of interest" description="Involved in Mg(2+) ion dislocation from EF-Tu" evidence="1">
    <location>
        <begin position="79"/>
        <end position="82"/>
    </location>
</feature>
<comment type="function">
    <text evidence="1">Associates with the EF-Tu.GDP complex and induces the exchange of GDP to GTP. It remains bound to the aminoacyl-tRNA.EF-Tu.GTP complex up to the GTP hydrolysis stage on the ribosome.</text>
</comment>
<comment type="subcellular location">
    <subcellularLocation>
        <location evidence="1">Cytoplasm</location>
    </subcellularLocation>
</comment>
<comment type="similarity">
    <text evidence="1">Belongs to the EF-Ts family.</text>
</comment>
<evidence type="ECO:0000255" key="1">
    <source>
        <dbReference type="HAMAP-Rule" id="MF_00050"/>
    </source>
</evidence>